<sequence length="87" mass="9638">MANIKSAKKRAVQSEKRRQHNASQRSMMRTYIKKVYAQVAAGEKSAAEAAFVEMQKVVDRMASKGLIHANKAANHKSKLAAQIKKLA</sequence>
<accession>A5UDA4</accession>
<comment type="function">
    <text evidence="1">Binds directly to 16S ribosomal RNA.</text>
</comment>
<comment type="similarity">
    <text evidence="1">Belongs to the bacterial ribosomal protein bS20 family.</text>
</comment>
<evidence type="ECO:0000255" key="1">
    <source>
        <dbReference type="HAMAP-Rule" id="MF_00500"/>
    </source>
</evidence>
<evidence type="ECO:0000256" key="2">
    <source>
        <dbReference type="SAM" id="MobiDB-lite"/>
    </source>
</evidence>
<evidence type="ECO:0000305" key="3"/>
<keyword id="KW-0687">Ribonucleoprotein</keyword>
<keyword id="KW-0689">Ribosomal protein</keyword>
<keyword id="KW-0694">RNA-binding</keyword>
<keyword id="KW-0699">rRNA-binding</keyword>
<feature type="chain" id="PRO_1000014589" description="Small ribosomal subunit protein bS20">
    <location>
        <begin position="1"/>
        <end position="87"/>
    </location>
</feature>
<feature type="region of interest" description="Disordered" evidence="2">
    <location>
        <begin position="1"/>
        <end position="27"/>
    </location>
</feature>
<feature type="compositionally biased region" description="Basic residues" evidence="2">
    <location>
        <begin position="1"/>
        <end position="11"/>
    </location>
</feature>
<proteinExistence type="inferred from homology"/>
<name>RS20_HAEIE</name>
<reference key="1">
    <citation type="journal article" date="2007" name="Genome Biol.">
        <title>Characterization and modeling of the Haemophilus influenzae core and supragenomes based on the complete genomic sequences of Rd and 12 clinical nontypeable strains.</title>
        <authorList>
            <person name="Hogg J.S."/>
            <person name="Hu F.Z."/>
            <person name="Janto B."/>
            <person name="Boissy R."/>
            <person name="Hayes J."/>
            <person name="Keefe R."/>
            <person name="Post J.C."/>
            <person name="Ehrlich G.D."/>
        </authorList>
    </citation>
    <scope>NUCLEOTIDE SEQUENCE [LARGE SCALE GENOMIC DNA]</scope>
    <source>
        <strain>PittEE</strain>
    </source>
</reference>
<dbReference type="EMBL" id="CP000671">
    <property type="protein sequence ID" value="ABQ98755.1"/>
    <property type="molecule type" value="Genomic_DNA"/>
</dbReference>
<dbReference type="SMR" id="A5UDA4"/>
<dbReference type="KEGG" id="hip:CGSHiEE_07130"/>
<dbReference type="HOGENOM" id="CLU_160655_4_0_6"/>
<dbReference type="GO" id="GO:0005829">
    <property type="term" value="C:cytosol"/>
    <property type="evidence" value="ECO:0007669"/>
    <property type="project" value="TreeGrafter"/>
</dbReference>
<dbReference type="GO" id="GO:0015935">
    <property type="term" value="C:small ribosomal subunit"/>
    <property type="evidence" value="ECO:0007669"/>
    <property type="project" value="TreeGrafter"/>
</dbReference>
<dbReference type="GO" id="GO:0070181">
    <property type="term" value="F:small ribosomal subunit rRNA binding"/>
    <property type="evidence" value="ECO:0007669"/>
    <property type="project" value="TreeGrafter"/>
</dbReference>
<dbReference type="GO" id="GO:0003735">
    <property type="term" value="F:structural constituent of ribosome"/>
    <property type="evidence" value="ECO:0007669"/>
    <property type="project" value="InterPro"/>
</dbReference>
<dbReference type="GO" id="GO:0006412">
    <property type="term" value="P:translation"/>
    <property type="evidence" value="ECO:0007669"/>
    <property type="project" value="UniProtKB-UniRule"/>
</dbReference>
<dbReference type="FunFam" id="1.20.58.110:FF:000001">
    <property type="entry name" value="30S ribosomal protein S20"/>
    <property type="match status" value="1"/>
</dbReference>
<dbReference type="Gene3D" id="1.20.58.110">
    <property type="entry name" value="Ribosomal protein S20"/>
    <property type="match status" value="1"/>
</dbReference>
<dbReference type="HAMAP" id="MF_00500">
    <property type="entry name" value="Ribosomal_bS20"/>
    <property type="match status" value="1"/>
</dbReference>
<dbReference type="InterPro" id="IPR002583">
    <property type="entry name" value="Ribosomal_bS20"/>
</dbReference>
<dbReference type="InterPro" id="IPR036510">
    <property type="entry name" value="Ribosomal_bS20_sf"/>
</dbReference>
<dbReference type="NCBIfam" id="TIGR00029">
    <property type="entry name" value="S20"/>
    <property type="match status" value="1"/>
</dbReference>
<dbReference type="PANTHER" id="PTHR33398">
    <property type="entry name" value="30S RIBOSOMAL PROTEIN S20"/>
    <property type="match status" value="1"/>
</dbReference>
<dbReference type="PANTHER" id="PTHR33398:SF1">
    <property type="entry name" value="SMALL RIBOSOMAL SUBUNIT PROTEIN BS20C"/>
    <property type="match status" value="1"/>
</dbReference>
<dbReference type="Pfam" id="PF01649">
    <property type="entry name" value="Ribosomal_S20p"/>
    <property type="match status" value="1"/>
</dbReference>
<dbReference type="SUPFAM" id="SSF46992">
    <property type="entry name" value="Ribosomal protein S20"/>
    <property type="match status" value="1"/>
</dbReference>
<gene>
    <name evidence="1" type="primary">rpsT</name>
    <name type="ordered locus">CGSHiEE_07130</name>
</gene>
<protein>
    <recommendedName>
        <fullName evidence="1">Small ribosomal subunit protein bS20</fullName>
    </recommendedName>
    <alternativeName>
        <fullName evidence="3">30S ribosomal protein S20</fullName>
    </alternativeName>
</protein>
<organism>
    <name type="scientific">Haemophilus influenzae (strain PittEE)</name>
    <dbReference type="NCBI Taxonomy" id="374930"/>
    <lineage>
        <taxon>Bacteria</taxon>
        <taxon>Pseudomonadati</taxon>
        <taxon>Pseudomonadota</taxon>
        <taxon>Gammaproteobacteria</taxon>
        <taxon>Pasteurellales</taxon>
        <taxon>Pasteurellaceae</taxon>
        <taxon>Haemophilus</taxon>
    </lineage>
</organism>